<evidence type="ECO:0000250" key="1"/>
<evidence type="ECO:0000255" key="2"/>
<evidence type="ECO:0000255" key="3">
    <source>
        <dbReference type="PROSITE-ProRule" id="PRU00521"/>
    </source>
</evidence>
<evidence type="ECO:0000256" key="4">
    <source>
        <dbReference type="SAM" id="MobiDB-lite"/>
    </source>
</evidence>
<evidence type="ECO:0000269" key="5">
    <source>
    </source>
</evidence>
<evidence type="ECO:0000269" key="6">
    <source>
    </source>
</evidence>
<evidence type="ECO:0000269" key="7">
    <source>
    </source>
</evidence>
<evidence type="ECO:0000269" key="8">
    <source>
    </source>
</evidence>
<evidence type="ECO:0000269" key="9">
    <source>
    </source>
</evidence>
<evidence type="ECO:0000269" key="10">
    <source>
    </source>
</evidence>
<evidence type="ECO:0000269" key="11">
    <source>
    </source>
</evidence>
<evidence type="ECO:0000269" key="12">
    <source>
    </source>
</evidence>
<evidence type="ECO:0000269" key="13">
    <source>
    </source>
</evidence>
<evidence type="ECO:0000269" key="14">
    <source>
    </source>
</evidence>
<evidence type="ECO:0000269" key="15">
    <source>
    </source>
</evidence>
<evidence type="ECO:0000305" key="16"/>
<dbReference type="EMBL" id="AF545043">
    <property type="protein sequence ID" value="AAO16236.1"/>
    <property type="molecule type" value="mRNA"/>
</dbReference>
<dbReference type="EMBL" id="AK078861">
    <property type="protein sequence ID" value="BAC37425.1"/>
    <property type="molecule type" value="mRNA"/>
</dbReference>
<dbReference type="EMBL" id="BC019570">
    <property type="protein sequence ID" value="AAH19570.1"/>
    <property type="molecule type" value="mRNA"/>
</dbReference>
<dbReference type="CCDS" id="CCDS21111.1"/>
<dbReference type="RefSeq" id="NP_001161981.1">
    <property type="nucleotide sequence ID" value="NM_001168509.1"/>
</dbReference>
<dbReference type="RefSeq" id="NP_001161982.1">
    <property type="nucleotide sequence ID" value="NM_001168510.1"/>
</dbReference>
<dbReference type="RefSeq" id="NP_001161983.1">
    <property type="nucleotide sequence ID" value="NM_001168511.1"/>
</dbReference>
<dbReference type="RefSeq" id="NP_001161984.1">
    <property type="nucleotide sequence ID" value="NM_001168512.1"/>
</dbReference>
<dbReference type="RefSeq" id="NP_666299.1">
    <property type="nucleotide sequence ID" value="NM_146187.4"/>
</dbReference>
<dbReference type="RefSeq" id="XP_011248850.1">
    <property type="nucleotide sequence ID" value="XM_011250548.4"/>
</dbReference>
<dbReference type="RefSeq" id="XP_011248851.1">
    <property type="nucleotide sequence ID" value="XM_011250549.4"/>
</dbReference>
<dbReference type="RefSeq" id="XP_011248854.1">
    <property type="nucleotide sequence ID" value="XM_011250552.3"/>
</dbReference>
<dbReference type="RefSeq" id="XP_011248855.1">
    <property type="nucleotide sequence ID" value="XM_011250553.3"/>
</dbReference>
<dbReference type="RefSeq" id="XP_011248856.1">
    <property type="nucleotide sequence ID" value="XM_011250554.4"/>
</dbReference>
<dbReference type="SMR" id="Q8VCK6"/>
<dbReference type="FunCoup" id="Q8VCK6">
    <property type="interactions" value="413"/>
</dbReference>
<dbReference type="STRING" id="10090.ENSMUSP00000052600"/>
<dbReference type="BindingDB" id="Q8VCK6"/>
<dbReference type="ChEMBL" id="CHEMBL3309047"/>
<dbReference type="GuidetoPHARMACOLOGY" id="226"/>
<dbReference type="GlyCosmos" id="Q8VCK6">
    <property type="glycosylation" value="2 sites, No reported glycans"/>
</dbReference>
<dbReference type="GlyGen" id="Q8VCK6">
    <property type="glycosylation" value="2 sites"/>
</dbReference>
<dbReference type="iPTMnet" id="Q8VCK6"/>
<dbReference type="PhosphoSitePlus" id="Q8VCK6"/>
<dbReference type="PaxDb" id="10090-ENSMUSP00000052600"/>
<dbReference type="ProteomicsDB" id="271691"/>
<dbReference type="Antibodypedia" id="15916">
    <property type="antibodies" value="350 antibodies from 31 providers"/>
</dbReference>
<dbReference type="DNASU" id="233079"/>
<dbReference type="Ensembl" id="ENSMUST00000053156.10">
    <property type="protein sequence ID" value="ENSMUSP00000052600.4"/>
    <property type="gene ID" value="ENSMUSG00000051314.12"/>
</dbReference>
<dbReference type="Ensembl" id="ENSMUST00000163504.8">
    <property type="protein sequence ID" value="ENSMUSP00000127758.2"/>
    <property type="gene ID" value="ENSMUSG00000051314.12"/>
</dbReference>
<dbReference type="Ensembl" id="ENSMUST00000168528.8">
    <property type="protein sequence ID" value="ENSMUSP00000129398.2"/>
    <property type="gene ID" value="ENSMUSG00000051314.12"/>
</dbReference>
<dbReference type="GeneID" id="233079"/>
<dbReference type="KEGG" id="mmu:233079"/>
<dbReference type="UCSC" id="uc009ggn.1">
    <property type="organism name" value="mouse"/>
</dbReference>
<dbReference type="AGR" id="MGI:2441731"/>
<dbReference type="CTD" id="2867"/>
<dbReference type="MGI" id="MGI:2441731">
    <property type="gene designation" value="Ffar2"/>
</dbReference>
<dbReference type="VEuPathDB" id="HostDB:ENSMUSG00000051314"/>
<dbReference type="eggNOG" id="ENOG502QQGM">
    <property type="taxonomic scope" value="Eukaryota"/>
</dbReference>
<dbReference type="GeneTree" id="ENSGT00990000203527"/>
<dbReference type="HOGENOM" id="CLU_009579_8_4_1"/>
<dbReference type="InParanoid" id="Q8VCK6"/>
<dbReference type="OMA" id="ITIFCYW"/>
<dbReference type="OrthoDB" id="5961208at2759"/>
<dbReference type="PhylomeDB" id="Q8VCK6"/>
<dbReference type="TreeFam" id="TF350010"/>
<dbReference type="Reactome" id="R-MMU-416476">
    <property type="pathway name" value="G alpha (q) signalling events"/>
</dbReference>
<dbReference type="Reactome" id="R-MMU-444209">
    <property type="pathway name" value="Free fatty acid receptors"/>
</dbReference>
<dbReference type="BioGRID-ORCS" id="233079">
    <property type="hits" value="2 hits in 81 CRISPR screens"/>
</dbReference>
<dbReference type="ChiTaRS" id="Ffar2">
    <property type="organism name" value="mouse"/>
</dbReference>
<dbReference type="PRO" id="PR:Q8VCK6"/>
<dbReference type="Proteomes" id="UP000000589">
    <property type="component" value="Chromosome 7"/>
</dbReference>
<dbReference type="RNAct" id="Q8VCK6">
    <property type="molecule type" value="protein"/>
</dbReference>
<dbReference type="Bgee" id="ENSMUSG00000051314">
    <property type="expression patterns" value="Expressed in dorsal pancreas and 87 other cell types or tissues"/>
</dbReference>
<dbReference type="ExpressionAtlas" id="Q8VCK6">
    <property type="expression patterns" value="baseline and differential"/>
</dbReference>
<dbReference type="GO" id="GO:0042995">
    <property type="term" value="C:cell projection"/>
    <property type="evidence" value="ECO:0007669"/>
    <property type="project" value="Ensembl"/>
</dbReference>
<dbReference type="GO" id="GO:0005886">
    <property type="term" value="C:plasma membrane"/>
    <property type="evidence" value="ECO:0000314"/>
    <property type="project" value="MGI"/>
</dbReference>
<dbReference type="GO" id="GO:0004930">
    <property type="term" value="F:G protein-coupled receptor activity"/>
    <property type="evidence" value="ECO:0000314"/>
    <property type="project" value="UniProtKB"/>
</dbReference>
<dbReference type="GO" id="GO:0008289">
    <property type="term" value="F:lipid binding"/>
    <property type="evidence" value="ECO:0007669"/>
    <property type="project" value="UniProtKB-KW"/>
</dbReference>
<dbReference type="GO" id="GO:0002752">
    <property type="term" value="P:cell surface pattern recognition receptor signaling pathway"/>
    <property type="evidence" value="ECO:0000250"/>
    <property type="project" value="UniProtKB"/>
</dbReference>
<dbReference type="GO" id="GO:0071398">
    <property type="term" value="P:cellular response to fatty acid"/>
    <property type="evidence" value="ECO:0000314"/>
    <property type="project" value="UniProtKB"/>
</dbReference>
<dbReference type="GO" id="GO:0045444">
    <property type="term" value="P:fat cell differentiation"/>
    <property type="evidence" value="ECO:0000315"/>
    <property type="project" value="UniProtKB"/>
</dbReference>
<dbReference type="GO" id="GO:0007186">
    <property type="term" value="P:G protein-coupled receptor signaling pathway"/>
    <property type="evidence" value="ECO:0000314"/>
    <property type="project" value="UniProtKB"/>
</dbReference>
<dbReference type="GO" id="GO:0042593">
    <property type="term" value="P:glucose homeostasis"/>
    <property type="evidence" value="ECO:0000314"/>
    <property type="project" value="UniProtKB"/>
</dbReference>
<dbReference type="GO" id="GO:0002232">
    <property type="term" value="P:leukocyte chemotaxis involved in inflammatory response"/>
    <property type="evidence" value="ECO:0000315"/>
    <property type="project" value="UniProtKB"/>
</dbReference>
<dbReference type="GO" id="GO:1990806">
    <property type="term" value="P:ligand-gated ion channel signaling pathway"/>
    <property type="evidence" value="ECO:0000314"/>
    <property type="project" value="MGI"/>
</dbReference>
<dbReference type="GO" id="GO:0019915">
    <property type="term" value="P:lipid storage"/>
    <property type="evidence" value="ECO:0000314"/>
    <property type="project" value="UniProtKB"/>
</dbReference>
<dbReference type="GO" id="GO:0002385">
    <property type="term" value="P:mucosal immune response"/>
    <property type="evidence" value="ECO:0000315"/>
    <property type="project" value="UniProtKB"/>
</dbReference>
<dbReference type="GO" id="GO:0046676">
    <property type="term" value="P:negative regulation of insulin secretion"/>
    <property type="evidence" value="ECO:0000315"/>
    <property type="project" value="MGI"/>
</dbReference>
<dbReference type="GO" id="GO:0007200">
    <property type="term" value="P:phospholipase C-activating G protein-coupled receptor signaling pathway"/>
    <property type="evidence" value="ECO:0000314"/>
    <property type="project" value="MGI"/>
</dbReference>
<dbReference type="GO" id="GO:0002879">
    <property type="term" value="P:positive regulation of acute inflammatory response to non-antigenic stimulus"/>
    <property type="evidence" value="ECO:0000315"/>
    <property type="project" value="UniProtKB"/>
</dbReference>
<dbReference type="GO" id="GO:0032722">
    <property type="term" value="P:positive regulation of chemokine production"/>
    <property type="evidence" value="ECO:0000315"/>
    <property type="project" value="UniProtKB"/>
</dbReference>
<dbReference type="GO" id="GO:0002720">
    <property type="term" value="P:positive regulation of cytokine production involved in immune response"/>
    <property type="evidence" value="ECO:0000315"/>
    <property type="project" value="UniProtKB"/>
</dbReference>
<dbReference type="GO" id="GO:0032024">
    <property type="term" value="P:positive regulation of insulin secretion"/>
    <property type="evidence" value="ECO:0000314"/>
    <property type="project" value="MGI"/>
</dbReference>
<dbReference type="GO" id="GO:0032757">
    <property type="term" value="P:positive regulation of interleukin-8 production"/>
    <property type="evidence" value="ECO:0000250"/>
    <property type="project" value="UniProtKB"/>
</dbReference>
<dbReference type="GO" id="GO:0002673">
    <property type="term" value="P:regulation of acute inflammatory response"/>
    <property type="evidence" value="ECO:0000315"/>
    <property type="project" value="UniProtKB"/>
</dbReference>
<dbReference type="GO" id="GO:0090276">
    <property type="term" value="P:regulation of peptide hormone secretion"/>
    <property type="evidence" value="ECO:0000314"/>
    <property type="project" value="UniProtKB"/>
</dbReference>
<dbReference type="CDD" id="cd15170">
    <property type="entry name" value="7tmA_FFAR2_FFAR3"/>
    <property type="match status" value="1"/>
</dbReference>
<dbReference type="FunFam" id="1.20.1070.10:FF:000173">
    <property type="entry name" value="Free fatty acid receptor 1"/>
    <property type="match status" value="1"/>
</dbReference>
<dbReference type="Gene3D" id="1.20.1070.10">
    <property type="entry name" value="Rhodopsin 7-helix transmembrane proteins"/>
    <property type="match status" value="1"/>
</dbReference>
<dbReference type="InterPro" id="IPR000276">
    <property type="entry name" value="GPCR_Rhodpsn"/>
</dbReference>
<dbReference type="InterPro" id="IPR017452">
    <property type="entry name" value="GPCR_Rhodpsn_7TM"/>
</dbReference>
<dbReference type="InterPro" id="IPR013312">
    <property type="entry name" value="GPR40-rel_orph"/>
</dbReference>
<dbReference type="PANTHER" id="PTHR45822:SF5">
    <property type="entry name" value="FREE FATTY ACID RECEPTOR 2"/>
    <property type="match status" value="1"/>
</dbReference>
<dbReference type="PANTHER" id="PTHR45822">
    <property type="entry name" value="FREE FATTY ACID RECEPTOR 2-RELATED"/>
    <property type="match status" value="1"/>
</dbReference>
<dbReference type="Pfam" id="PF00001">
    <property type="entry name" value="7tm_1"/>
    <property type="match status" value="1"/>
</dbReference>
<dbReference type="PRINTS" id="PR00237">
    <property type="entry name" value="GPCRRHODOPSN"/>
</dbReference>
<dbReference type="PRINTS" id="PR01904">
    <property type="entry name" value="GPR40FAMILY"/>
</dbReference>
<dbReference type="SUPFAM" id="SSF81321">
    <property type="entry name" value="Family A G protein-coupled receptor-like"/>
    <property type="match status" value="1"/>
</dbReference>
<dbReference type="PROSITE" id="PS00237">
    <property type="entry name" value="G_PROTEIN_RECEP_F1_1"/>
    <property type="match status" value="1"/>
</dbReference>
<dbReference type="PROSITE" id="PS50262">
    <property type="entry name" value="G_PROTEIN_RECEP_F1_2"/>
    <property type="match status" value="1"/>
</dbReference>
<feature type="chain" id="PRO_0000228144" description="Free fatty acid receptor 2">
    <location>
        <begin position="1"/>
        <end position="330"/>
    </location>
</feature>
<feature type="topological domain" description="Extracellular" evidence="2">
    <location>
        <begin position="1"/>
        <end position="8"/>
    </location>
</feature>
<feature type="transmembrane region" description="Helical; Name=1" evidence="2">
    <location>
        <begin position="9"/>
        <end position="29"/>
    </location>
</feature>
<feature type="topological domain" description="Cytoplasmic" evidence="2">
    <location>
        <begin position="30"/>
        <end position="43"/>
    </location>
</feature>
<feature type="transmembrane region" description="Helical; Name=2" evidence="2">
    <location>
        <begin position="44"/>
        <end position="64"/>
    </location>
</feature>
<feature type="topological domain" description="Extracellular" evidence="2">
    <location>
        <begin position="65"/>
        <end position="79"/>
    </location>
</feature>
<feature type="transmembrane region" description="Helical; Name=3" evidence="2">
    <location>
        <begin position="80"/>
        <end position="100"/>
    </location>
</feature>
<feature type="topological domain" description="Cytoplasmic" evidence="2">
    <location>
        <begin position="101"/>
        <end position="126"/>
    </location>
</feature>
<feature type="transmembrane region" description="Helical; Name=4" evidence="2">
    <location>
        <begin position="127"/>
        <end position="147"/>
    </location>
</feature>
<feature type="topological domain" description="Extracellular" evidence="2">
    <location>
        <begin position="148"/>
        <end position="184"/>
    </location>
</feature>
<feature type="transmembrane region" description="Helical; Name=5" evidence="2">
    <location>
        <begin position="185"/>
        <end position="205"/>
    </location>
</feature>
<feature type="topological domain" description="Cytoplasmic" evidence="2">
    <location>
        <begin position="206"/>
        <end position="219"/>
    </location>
</feature>
<feature type="transmembrane region" description="Helical; Name=6" evidence="2">
    <location>
        <begin position="220"/>
        <end position="240"/>
    </location>
</feature>
<feature type="topological domain" description="Extracellular" evidence="2">
    <location>
        <begin position="241"/>
        <end position="255"/>
    </location>
</feature>
<feature type="transmembrane region" description="Helical; Name=7" evidence="2">
    <location>
        <begin position="256"/>
        <end position="276"/>
    </location>
</feature>
<feature type="topological domain" description="Cytoplasmic" evidence="2">
    <location>
        <begin position="277"/>
        <end position="330"/>
    </location>
</feature>
<feature type="region of interest" description="Disordered" evidence="4">
    <location>
        <begin position="306"/>
        <end position="330"/>
    </location>
</feature>
<feature type="compositionally biased region" description="Polar residues" evidence="4">
    <location>
        <begin position="320"/>
        <end position="330"/>
    </location>
</feature>
<feature type="glycosylation site" description="N-linked (GlcNAc...) asparagine" evidence="2">
    <location>
        <position position="151"/>
    </location>
</feature>
<feature type="glycosylation site" description="N-linked (GlcNAc...) asparagine" evidence="2">
    <location>
        <position position="167"/>
    </location>
</feature>
<feature type="mutagenesis site" description="Gain of SCFA-independent constitutive G protein-coupled receptor activity." evidence="13">
    <original>E</original>
    <variation>G</variation>
    <location>
        <position position="159"/>
    </location>
</feature>
<accession>Q8VCK6</accession>
<comment type="function">
    <text evidence="6 7 8 9 10 11 12 14 15">G protein-coupled receptor that is activated by a major product of dietary fiber digestion, the short chain fatty acids (SCFAs), and that plays a role in the regulation of whole-body energy homeostasis and in intestinal immunity. In omnivorous mammals, the short chain fatty acids acetate, propionate and butyrate are produced primarily by the gut microbiome that metabolizes dietary fibers. SCFAs serve as a source of energy but also act as signaling molecules. That G protein-coupled receptor is probably coupled to the pertussis toxin-sensitive, G(i/o)-alpha family of G proteins but also to the Gq family (PubMed:23589301). Its activation results in the formation of inositol 1,4,5-trisphosphate, the mobilization of intracellular calcium, the phosphorylation of the MAPK3/ERK1 and MAPK1/ERK2 kinases and the inhibition of intracellular cAMP accumulation. May play a role in glucose homeostasis by regulating the secretion of GLP-1, in response to short-chain fatty acids accumulating in the intestine (PubMed:22190648, PubMed:23589301). May also regulate the production of LEP/Leptin, a hormone acting on the central nervous system to inhibit food intake (PubMed:20399779). Finally, may also regulate whole-body energy homeostasis through adipogenesis regulating both differentiation and lipid storage of adipocytes (PubMed:16123168, PubMed:23589301). In parallel to its role in energy homeostasis, may also mediate the activation of the inflammatory and immune responses by SCFA in the intestine, regulating the rapid production of chemokines and cytokines (PubMed:23665276). May also play a role in the resolution of the inflammatory response and control chemotaxis in neutrophils (PubMed:19865172, PubMed:19917676). In addition to SCFAs, may also be activated by the extracellular lectin FCN1 in a process leading to activation of monocytes and inducing the secretion of interleukin-8/IL-8 in response to the presence of microbes.</text>
</comment>
<comment type="subunit">
    <text evidence="1">Interacts with FCN1 (via Fibrinogen C-terminal domain).</text>
</comment>
<comment type="subcellular location">
    <subcellularLocation>
        <location evidence="16">Cell membrane</location>
        <topology evidence="16">Multi-pass membrane protein</topology>
    </subcellularLocation>
</comment>
<comment type="tissue specificity">
    <text evidence="5 7 12">Highly expressed in hematopoietic tissues, such as spleen and bone marrow, with highest levels in a subset of immune cells, including monocytes or neutrophils. Expressed in adipose tissues with high expression in differentiating adipocytes. Expressed by intestinal endocrine cells.</text>
</comment>
<comment type="induction">
    <text evidence="5 7">During differentiation of leukocytes. This induction is STAT3-dependent. Up-regulated in adipose tissues by high-fat diet.</text>
</comment>
<comment type="disruption phenotype">
    <text evidence="8 9 15">Knockout mice display altered protective intestinal inflammatory and immune responses but no gross developmental defects.</text>
</comment>
<comment type="similarity">
    <text evidence="3">Belongs to the G-protein coupled receptor 1 family.</text>
</comment>
<keyword id="KW-1003">Cell membrane</keyword>
<keyword id="KW-0297">G-protein coupled receptor</keyword>
<keyword id="KW-0325">Glycoprotein</keyword>
<keyword id="KW-0391">Immunity</keyword>
<keyword id="KW-0395">Inflammatory response</keyword>
<keyword id="KW-0446">Lipid-binding</keyword>
<keyword id="KW-0472">Membrane</keyword>
<keyword id="KW-0675">Receptor</keyword>
<keyword id="KW-1185">Reference proteome</keyword>
<keyword id="KW-0807">Transducer</keyword>
<keyword id="KW-0812">Transmembrane</keyword>
<keyword id="KW-1133">Transmembrane helix</keyword>
<gene>
    <name type="primary">Ffar2</name>
    <name type="synonym">Gpr43</name>
    <name type="synonym">Lssig</name>
</gene>
<organism>
    <name type="scientific">Mus musculus</name>
    <name type="common">Mouse</name>
    <dbReference type="NCBI Taxonomy" id="10090"/>
    <lineage>
        <taxon>Eukaryota</taxon>
        <taxon>Metazoa</taxon>
        <taxon>Chordata</taxon>
        <taxon>Craniata</taxon>
        <taxon>Vertebrata</taxon>
        <taxon>Euteleostomi</taxon>
        <taxon>Mammalia</taxon>
        <taxon>Eutheria</taxon>
        <taxon>Euarchontoglires</taxon>
        <taxon>Glires</taxon>
        <taxon>Rodentia</taxon>
        <taxon>Myomorpha</taxon>
        <taxon>Muroidea</taxon>
        <taxon>Muridae</taxon>
        <taxon>Murinae</taxon>
        <taxon>Mus</taxon>
        <taxon>Mus</taxon>
    </lineage>
</organism>
<proteinExistence type="evidence at protein level"/>
<protein>
    <recommendedName>
        <fullName>Free fatty acid receptor 2</fullName>
    </recommendedName>
    <alternativeName>
        <fullName>G-protein coupled receptor 43</fullName>
    </alternativeName>
    <alternativeName>
        <fullName>Leukocyte-specific STAT-induced GPCR</fullName>
    </alternativeName>
</protein>
<reference key="1">
    <citation type="journal article" date="2003" name="Blood">
        <title>LSSIG is a novel murine leukocyte-specific GPCR that is induced by the activation of STAT3.</title>
        <authorList>
            <person name="Senga T."/>
            <person name="Iwamoto S."/>
            <person name="Yoshida T."/>
            <person name="Yokota T."/>
            <person name="Adachi K."/>
            <person name="Azuma E."/>
            <person name="Hamaguchi M."/>
            <person name="Iwamoto T."/>
        </authorList>
    </citation>
    <scope>NUCLEOTIDE SEQUENCE [MRNA]</scope>
    <scope>TISSUE SPECIFICITY</scope>
    <scope>INDUCTION</scope>
    <source>
        <strain>ddY</strain>
    </source>
</reference>
<reference key="2">
    <citation type="journal article" date="2005" name="Science">
        <title>The transcriptional landscape of the mammalian genome.</title>
        <authorList>
            <person name="Carninci P."/>
            <person name="Kasukawa T."/>
            <person name="Katayama S."/>
            <person name="Gough J."/>
            <person name="Frith M.C."/>
            <person name="Maeda N."/>
            <person name="Oyama R."/>
            <person name="Ravasi T."/>
            <person name="Lenhard B."/>
            <person name="Wells C."/>
            <person name="Kodzius R."/>
            <person name="Shimokawa K."/>
            <person name="Bajic V.B."/>
            <person name="Brenner S.E."/>
            <person name="Batalov S."/>
            <person name="Forrest A.R."/>
            <person name="Zavolan M."/>
            <person name="Davis M.J."/>
            <person name="Wilming L.G."/>
            <person name="Aidinis V."/>
            <person name="Allen J.E."/>
            <person name="Ambesi-Impiombato A."/>
            <person name="Apweiler R."/>
            <person name="Aturaliya R.N."/>
            <person name="Bailey T.L."/>
            <person name="Bansal M."/>
            <person name="Baxter L."/>
            <person name="Beisel K.W."/>
            <person name="Bersano T."/>
            <person name="Bono H."/>
            <person name="Chalk A.M."/>
            <person name="Chiu K.P."/>
            <person name="Choudhary V."/>
            <person name="Christoffels A."/>
            <person name="Clutterbuck D.R."/>
            <person name="Crowe M.L."/>
            <person name="Dalla E."/>
            <person name="Dalrymple B.P."/>
            <person name="de Bono B."/>
            <person name="Della Gatta G."/>
            <person name="di Bernardo D."/>
            <person name="Down T."/>
            <person name="Engstrom P."/>
            <person name="Fagiolini M."/>
            <person name="Faulkner G."/>
            <person name="Fletcher C.F."/>
            <person name="Fukushima T."/>
            <person name="Furuno M."/>
            <person name="Futaki S."/>
            <person name="Gariboldi M."/>
            <person name="Georgii-Hemming P."/>
            <person name="Gingeras T.R."/>
            <person name="Gojobori T."/>
            <person name="Green R.E."/>
            <person name="Gustincich S."/>
            <person name="Harbers M."/>
            <person name="Hayashi Y."/>
            <person name="Hensch T.K."/>
            <person name="Hirokawa N."/>
            <person name="Hill D."/>
            <person name="Huminiecki L."/>
            <person name="Iacono M."/>
            <person name="Ikeo K."/>
            <person name="Iwama A."/>
            <person name="Ishikawa T."/>
            <person name="Jakt M."/>
            <person name="Kanapin A."/>
            <person name="Katoh M."/>
            <person name="Kawasawa Y."/>
            <person name="Kelso J."/>
            <person name="Kitamura H."/>
            <person name="Kitano H."/>
            <person name="Kollias G."/>
            <person name="Krishnan S.P."/>
            <person name="Kruger A."/>
            <person name="Kummerfeld S.K."/>
            <person name="Kurochkin I.V."/>
            <person name="Lareau L.F."/>
            <person name="Lazarevic D."/>
            <person name="Lipovich L."/>
            <person name="Liu J."/>
            <person name="Liuni S."/>
            <person name="McWilliam S."/>
            <person name="Madan Babu M."/>
            <person name="Madera M."/>
            <person name="Marchionni L."/>
            <person name="Matsuda H."/>
            <person name="Matsuzawa S."/>
            <person name="Miki H."/>
            <person name="Mignone F."/>
            <person name="Miyake S."/>
            <person name="Morris K."/>
            <person name="Mottagui-Tabar S."/>
            <person name="Mulder N."/>
            <person name="Nakano N."/>
            <person name="Nakauchi H."/>
            <person name="Ng P."/>
            <person name="Nilsson R."/>
            <person name="Nishiguchi S."/>
            <person name="Nishikawa S."/>
            <person name="Nori F."/>
            <person name="Ohara O."/>
            <person name="Okazaki Y."/>
            <person name="Orlando V."/>
            <person name="Pang K.C."/>
            <person name="Pavan W.J."/>
            <person name="Pavesi G."/>
            <person name="Pesole G."/>
            <person name="Petrovsky N."/>
            <person name="Piazza S."/>
            <person name="Reed J."/>
            <person name="Reid J.F."/>
            <person name="Ring B.Z."/>
            <person name="Ringwald M."/>
            <person name="Rost B."/>
            <person name="Ruan Y."/>
            <person name="Salzberg S.L."/>
            <person name="Sandelin A."/>
            <person name="Schneider C."/>
            <person name="Schoenbach C."/>
            <person name="Sekiguchi K."/>
            <person name="Semple C.A."/>
            <person name="Seno S."/>
            <person name="Sessa L."/>
            <person name="Sheng Y."/>
            <person name="Shibata Y."/>
            <person name="Shimada H."/>
            <person name="Shimada K."/>
            <person name="Silva D."/>
            <person name="Sinclair B."/>
            <person name="Sperling S."/>
            <person name="Stupka E."/>
            <person name="Sugiura K."/>
            <person name="Sultana R."/>
            <person name="Takenaka Y."/>
            <person name="Taki K."/>
            <person name="Tammoja K."/>
            <person name="Tan S.L."/>
            <person name="Tang S."/>
            <person name="Taylor M.S."/>
            <person name="Tegner J."/>
            <person name="Teichmann S.A."/>
            <person name="Ueda H.R."/>
            <person name="van Nimwegen E."/>
            <person name="Verardo R."/>
            <person name="Wei C.L."/>
            <person name="Yagi K."/>
            <person name="Yamanishi H."/>
            <person name="Zabarovsky E."/>
            <person name="Zhu S."/>
            <person name="Zimmer A."/>
            <person name="Hide W."/>
            <person name="Bult C."/>
            <person name="Grimmond S.M."/>
            <person name="Teasdale R.D."/>
            <person name="Liu E.T."/>
            <person name="Brusic V."/>
            <person name="Quackenbush J."/>
            <person name="Wahlestedt C."/>
            <person name="Mattick J.S."/>
            <person name="Hume D.A."/>
            <person name="Kai C."/>
            <person name="Sasaki D."/>
            <person name="Tomaru Y."/>
            <person name="Fukuda S."/>
            <person name="Kanamori-Katayama M."/>
            <person name="Suzuki M."/>
            <person name="Aoki J."/>
            <person name="Arakawa T."/>
            <person name="Iida J."/>
            <person name="Imamura K."/>
            <person name="Itoh M."/>
            <person name="Kato T."/>
            <person name="Kawaji H."/>
            <person name="Kawagashira N."/>
            <person name="Kawashima T."/>
            <person name="Kojima M."/>
            <person name="Kondo S."/>
            <person name="Konno H."/>
            <person name="Nakano K."/>
            <person name="Ninomiya N."/>
            <person name="Nishio T."/>
            <person name="Okada M."/>
            <person name="Plessy C."/>
            <person name="Shibata K."/>
            <person name="Shiraki T."/>
            <person name="Suzuki S."/>
            <person name="Tagami M."/>
            <person name="Waki K."/>
            <person name="Watahiki A."/>
            <person name="Okamura-Oho Y."/>
            <person name="Suzuki H."/>
            <person name="Kawai J."/>
            <person name="Hayashizaki Y."/>
        </authorList>
    </citation>
    <scope>NUCLEOTIDE SEQUENCE [LARGE SCALE MRNA]</scope>
    <source>
        <strain>C57BL/6J</strain>
        <tissue>Colon</tissue>
    </source>
</reference>
<reference key="3">
    <citation type="journal article" date="2004" name="Genome Res.">
        <title>The status, quality, and expansion of the NIH full-length cDNA project: the Mammalian Gene Collection (MGC).</title>
        <authorList>
            <consortium name="The MGC Project Team"/>
        </authorList>
    </citation>
    <scope>NUCLEOTIDE SEQUENCE [LARGE SCALE MRNA]</scope>
    <source>
        <strain>FVB/N</strain>
        <tissue>Colon</tissue>
    </source>
</reference>
<reference key="4">
    <citation type="journal article" date="2003" name="Biochem. Biophys. Res. Commun.">
        <title>Identification of a free fatty acid receptor, FFA2R, expressed on leukocytes and activated by short-chain fatty acids.</title>
        <authorList>
            <person name="Nilsson N.E."/>
            <person name="Kotarsky K."/>
            <person name="Owman C."/>
            <person name="Olde B."/>
        </authorList>
    </citation>
    <scope>FUNCTION</scope>
</reference>
<reference key="5">
    <citation type="journal article" date="2005" name="Endocrinology">
        <title>Acetate and propionate short chain fatty acids stimulate adipogenesis via GPCR43.</title>
        <authorList>
            <person name="Hong Y.H."/>
            <person name="Nishimura Y."/>
            <person name="Hishikawa D."/>
            <person name="Tsuzuki H."/>
            <person name="Miyahara H."/>
            <person name="Gotoh C."/>
            <person name="Choi K.C."/>
            <person name="Feng D.D."/>
            <person name="Chen C."/>
            <person name="Lee H.G."/>
            <person name="Katoh K."/>
            <person name="Roh S.G."/>
            <person name="Sasaki S."/>
        </authorList>
    </citation>
    <scope>FUNCTION</scope>
    <scope>TISSUE SPECIFICITY</scope>
    <scope>INDUCTION</scope>
</reference>
<reference key="6">
    <citation type="journal article" date="2008" name="Endocrinology">
        <title>Activation of G protein-coupled receptor 43 in adipocytes leads to inhibition of lipolysis and suppression of plasma free fatty acids.</title>
        <authorList>
            <person name="Ge H."/>
            <person name="Li X."/>
            <person name="Weiszmann J."/>
            <person name="Wang P."/>
            <person name="Baribault H."/>
            <person name="Chen J.L."/>
            <person name="Tian H."/>
            <person name="Li Y."/>
        </authorList>
    </citation>
    <scope>FUNCTION</scope>
    <scope>DISRUPTION PHENOTYPE</scope>
</reference>
<reference key="7">
    <citation type="journal article" date="2009" name="J. Immunol.">
        <title>G protein-coupled receptor 43 is essential for neutrophil recruitment during intestinal inflammation.</title>
        <authorList>
            <person name="Sina C."/>
            <person name="Gavrilova O."/>
            <person name="Forster M."/>
            <person name="Till A."/>
            <person name="Derer S."/>
            <person name="Hildebrand F."/>
            <person name="Raabe B."/>
            <person name="Chalaris A."/>
            <person name="Scheller J."/>
            <person name="Rehmann A."/>
            <person name="Franke A."/>
            <person name="Ott S."/>
            <person name="Hasler R."/>
            <person name="Nikolaus S."/>
            <person name="Folsch U.R."/>
            <person name="Rose-John S."/>
            <person name="Jiang H.P."/>
            <person name="Li J."/>
            <person name="Schreiber S."/>
            <person name="Rosenstiel P."/>
        </authorList>
    </citation>
    <scope>FUNCTION</scope>
</reference>
<reference key="8">
    <citation type="journal article" date="2009" name="Nature">
        <title>Regulation of inflammatory responses by gut microbiota and chemoattractant receptor GPR43.</title>
        <authorList>
            <person name="Maslowski K.M."/>
            <person name="Vieira A.T."/>
            <person name="Ng A."/>
            <person name="Kranich J."/>
            <person name="Sierro F."/>
            <person name="Yu D."/>
            <person name="Schilter H.C."/>
            <person name="Rolph M.S."/>
            <person name="Mackay F."/>
            <person name="Artis D."/>
            <person name="Xavier R.J."/>
            <person name="Teixeira M.M."/>
            <person name="Mackay C.R."/>
        </authorList>
    </citation>
    <scope>FUNCTION</scope>
    <scope>DISRUPTION PHENOTYPE</scope>
</reference>
<reference key="9">
    <citation type="journal article" date="2010" name="FEBS Lett.">
        <title>Roles of GPR41 and GPR43 in leptin secretory responses of murine adipocytes to short chain fatty acids.</title>
        <authorList>
            <person name="Zaibi M.S."/>
            <person name="Stocker C.J."/>
            <person name="O'Dowd J."/>
            <person name="Davies A."/>
            <person name="Bellahcene M."/>
            <person name="Cawthorne M.A."/>
            <person name="Brown A.J."/>
            <person name="Smith D.M."/>
            <person name="Arch J.R."/>
        </authorList>
    </citation>
    <scope>FUNCTION</scope>
</reference>
<reference key="10">
    <citation type="journal article" date="2012" name="Diabetes">
        <title>Short-chain fatty acids stimulate glucagon-like peptide-1 secretion via the G-protein-coupled receptor FFAR2.</title>
        <authorList>
            <person name="Tolhurst G."/>
            <person name="Heffron H."/>
            <person name="Lam Y.S."/>
            <person name="Parker H.E."/>
            <person name="Habib A.M."/>
            <person name="Diakogiannaki E."/>
            <person name="Cameron J."/>
            <person name="Grosse J."/>
            <person name="Reimann F."/>
            <person name="Gribble F.M."/>
        </authorList>
    </citation>
    <scope>FUNCTION</scope>
    <scope>TISSUE SPECIFICITY</scope>
</reference>
<reference key="11">
    <citation type="journal article" date="2012" name="J. Biol. Chem.">
        <title>Extracellular ionic locks determine variation in constitutive activity and ligand potency between species orthologs of the free fatty acid receptors FFA2 and FFA3.</title>
        <authorList>
            <person name="Hudson B.D."/>
            <person name="Tikhonova I.G."/>
            <person name="Pandey S.K."/>
            <person name="Ulven T."/>
            <person name="Milligan G."/>
        </authorList>
    </citation>
    <scope>MUTAGENESIS OF GLU-159</scope>
</reference>
<reference key="12">
    <citation type="journal article" date="2013" name="Gastroenterology">
        <title>Short-chain fatty acids activate GPR41 and GPR43 on intestinal epithelial cells to promote inflammatory responses in mice.</title>
        <authorList>
            <person name="Kim M.H."/>
            <person name="Kang S.G."/>
            <person name="Park J.H."/>
            <person name="Yanagisawa M."/>
            <person name="Kim C.H."/>
        </authorList>
    </citation>
    <scope>FUNCTION</scope>
    <scope>DISRUPTION PHENOTYPE</scope>
</reference>
<reference key="13">
    <citation type="journal article" date="2013" name="J. Biol. Chem.">
        <title>Defining the molecular basis for the first potent and selective orthosteric agonists of the FFA2 free fatty acid receptor.</title>
        <authorList>
            <person name="Hudson B.D."/>
            <person name="Due-Hansen M.E."/>
            <person name="Christiansen E."/>
            <person name="Hansen A.M."/>
            <person name="Mackenzie A.E."/>
            <person name="Murdoch H."/>
            <person name="Pandey S.K."/>
            <person name="Ward R.J."/>
            <person name="Marquez R."/>
            <person name="Tikhonova I.G."/>
            <person name="Ulven T."/>
            <person name="Milligan G."/>
        </authorList>
    </citation>
    <scope>FUNCTION</scope>
</reference>
<name>FFAR2_MOUSE</name>
<sequence length="330" mass="37124">MTPDWHSSLILTAYILIFLTGLPANLLALRAFMGRVRQPQPAPVHILLLNLTLADLLLLLLLPFRIVEAASNFRWYLPKIVCALTGFGFYSSIYCSTWLLAGISMERYLGVAFPVQYKLSRRPLYGVIAALVAWIMSFGHCTIVIIVQYLNSTEQVGTENQITCYENFTQEQLDVVLPVRLELCLVLFFVPMAVTIFCYWRFVWIMLTQPHVGAQRRRRAVGLAVVTLLNFLVCFGPYNMSHLVGFYLRQSPSWRVEAVVFSSLNASLDPLLFYFSSSVVRRAFGKGLLLIRNPASSMLGRGAKETVEGTKMDRGGSQAEGVQSSEFVTE</sequence>